<comment type="function">
    <text evidence="4 5">Transcription factor that regulates the expression of the gene cluster that mediates the biosynthesis of the mycotoxin citrinin, a hepato-nephrotoxic compound to humans due to inhibition of respiration complex III (PubMed:17586673, PubMed:19111642).</text>
</comment>
<comment type="subcellular location">
    <subcellularLocation>
        <location evidence="1">Nucleus</location>
    </subcellularLocation>
</comment>
<comment type="disruption phenotype">
    <text evidence="4">Leads to a large decrease in the transcription of pksCT and ctnC, together with reduction of citrinin production to barely detectable level (PubMed:17586673).</text>
</comment>
<accession>Q1ERI1</accession>
<protein>
    <recommendedName>
        <fullName>Citrinin biosynthesis transcriptional activator ctnR</fullName>
    </recommendedName>
</protein>
<reference key="1">
    <citation type="journal article" date="2007" name="Appl. Environ. Microbiol.">
        <title>Identification and in vivo functional analysis by gene disruption of ctnA, an activator gene involved in citrinin biosynthesis in Monascus purpureus.</title>
        <authorList>
            <person name="Shimizu T."/>
            <person name="Kinoshita H."/>
            <person name="Nihira T."/>
        </authorList>
    </citation>
    <scope>NUCLEOTIDE SEQUENCE [GENOMIC DNA]</scope>
    <scope>DISRUPTION PHENOTYPE</scope>
    <scope>FUNCTION</scope>
</reference>
<reference key="2">
    <citation type="journal article" date="2008" name="J. Biosci. Bioeng.">
        <title>Construction of a citrinin gene cluster expression system in heterologous Aspergillus oryzae.</title>
        <authorList>
            <person name="Sakai K."/>
            <person name="Kinoshita H."/>
            <person name="Shimizu T."/>
            <person name="Nihira T."/>
        </authorList>
    </citation>
    <scope>FUNCTION</scope>
</reference>
<sequence length="576" mass="65177">MLSHEMASTAHRQPSRPTTRQRQRTGRACEECRRRKLRCDGQQPRCGVCVDSGVTCEVNSQRRPRGPKKGYLTALRNRVAMLETRLPAQHLVGPLSEFNPLSTPLTNDHHDGCSVSSASSRSDSNPPPTVSEPDMSLPNTTTSVSSAPSFATCSKDIGGAEPITELVQAELNQLYFDRVHPSIQILHQRRYLGWARNAAKKTSRRCLQYAVWTLASLLSAQFQHLQDSFYQETKRTLEFSYLSGDSNAPVDTEEIQAWILIATYESMRTFHRSAWMSAGRAFRLVQLMRLHEIDSPTKPPVPEADLVETEEKRRVFWMAYFLDHLLSMRNNWPITLNEHVICTRLPAPDMEFQSGQPVLGAFLSEAIMDVMPQTTSPFNECVILATICGRSLFHAQQYSVRFVYGELAPNWTDQHQWLDNVLTNRLQILSQYYPSPTQICDPMLSFAHIMGQASVIHLYKGMASVVWAVDDGAWVVEYQRRALSAAQEIVKLAKGLTEFNFFKVHPLMPIPLLLCAEFLYSNRGSDAAFNSLLQELLQIFRQLKNANDPSRSYIHLLELSCTTASMSLVREHSNAP</sequence>
<evidence type="ECO:0000255" key="1"/>
<evidence type="ECO:0000255" key="2">
    <source>
        <dbReference type="PROSITE-ProRule" id="PRU00227"/>
    </source>
</evidence>
<evidence type="ECO:0000256" key="3">
    <source>
        <dbReference type="SAM" id="MobiDB-lite"/>
    </source>
</evidence>
<evidence type="ECO:0000269" key="4">
    <source>
    </source>
</evidence>
<evidence type="ECO:0000269" key="5">
    <source>
    </source>
</evidence>
<evidence type="ECO:0000303" key="6">
    <source>
    </source>
</evidence>
<proteinExistence type="inferred from homology"/>
<gene>
    <name evidence="6" type="primary">ctnR</name>
    <name evidence="6" type="synonym">ctnA</name>
    <name evidence="6" type="synonym">orf2</name>
</gene>
<organism>
    <name type="scientific">Monascus purpureus</name>
    <name type="common">Red mold</name>
    <name type="synonym">Monascus anka</name>
    <dbReference type="NCBI Taxonomy" id="5098"/>
    <lineage>
        <taxon>Eukaryota</taxon>
        <taxon>Fungi</taxon>
        <taxon>Dikarya</taxon>
        <taxon>Ascomycota</taxon>
        <taxon>Pezizomycotina</taxon>
        <taxon>Eurotiomycetes</taxon>
        <taxon>Eurotiomycetidae</taxon>
        <taxon>Eurotiales</taxon>
        <taxon>Aspergillaceae</taxon>
        <taxon>Monascus</taxon>
    </lineage>
</organism>
<feature type="chain" id="PRO_0000440324" description="Citrinin biosynthesis transcriptional activator ctnR">
    <location>
        <begin position="1"/>
        <end position="576"/>
    </location>
</feature>
<feature type="DNA-binding region" description="Zn(2)-C6 fungal-type" evidence="2">
    <location>
        <begin position="29"/>
        <end position="56"/>
    </location>
</feature>
<feature type="region of interest" description="Disordered" evidence="3">
    <location>
        <begin position="1"/>
        <end position="27"/>
    </location>
</feature>
<feature type="region of interest" description="Disordered" evidence="3">
    <location>
        <begin position="102"/>
        <end position="148"/>
    </location>
</feature>
<feature type="compositionally biased region" description="Low complexity" evidence="3">
    <location>
        <begin position="114"/>
        <end position="124"/>
    </location>
</feature>
<feature type="compositionally biased region" description="Polar residues" evidence="3">
    <location>
        <begin position="137"/>
        <end position="148"/>
    </location>
</feature>
<keyword id="KW-0238">DNA-binding</keyword>
<keyword id="KW-0479">Metal-binding</keyword>
<keyword id="KW-0539">Nucleus</keyword>
<keyword id="KW-0804">Transcription</keyword>
<keyword id="KW-0805">Transcription regulation</keyword>
<keyword id="KW-0862">Zinc</keyword>
<dbReference type="EMBL" id="AB243687">
    <property type="protein sequence ID" value="BAE95337.1"/>
    <property type="molecule type" value="Genomic_DNA"/>
</dbReference>
<dbReference type="OrthoDB" id="3037908at2759"/>
<dbReference type="GO" id="GO:0005634">
    <property type="term" value="C:nucleus"/>
    <property type="evidence" value="ECO:0007669"/>
    <property type="project" value="UniProtKB-SubCell"/>
</dbReference>
<dbReference type="GO" id="GO:0003677">
    <property type="term" value="F:DNA binding"/>
    <property type="evidence" value="ECO:0007669"/>
    <property type="project" value="UniProtKB-KW"/>
</dbReference>
<dbReference type="GO" id="GO:0000981">
    <property type="term" value="F:DNA-binding transcription factor activity, RNA polymerase II-specific"/>
    <property type="evidence" value="ECO:0007669"/>
    <property type="project" value="InterPro"/>
</dbReference>
<dbReference type="GO" id="GO:0008270">
    <property type="term" value="F:zinc ion binding"/>
    <property type="evidence" value="ECO:0007669"/>
    <property type="project" value="InterPro"/>
</dbReference>
<dbReference type="GO" id="GO:0006351">
    <property type="term" value="P:DNA-templated transcription"/>
    <property type="evidence" value="ECO:0007669"/>
    <property type="project" value="InterPro"/>
</dbReference>
<dbReference type="CDD" id="cd12148">
    <property type="entry name" value="fungal_TF_MHR"/>
    <property type="match status" value="1"/>
</dbReference>
<dbReference type="CDD" id="cd00067">
    <property type="entry name" value="GAL4"/>
    <property type="match status" value="1"/>
</dbReference>
<dbReference type="Gene3D" id="4.10.240.10">
    <property type="entry name" value="Zn(2)-C6 fungal-type DNA-binding domain"/>
    <property type="match status" value="1"/>
</dbReference>
<dbReference type="InterPro" id="IPR050815">
    <property type="entry name" value="TF_fung"/>
</dbReference>
<dbReference type="InterPro" id="IPR007219">
    <property type="entry name" value="Transcription_factor_dom_fun"/>
</dbReference>
<dbReference type="InterPro" id="IPR036864">
    <property type="entry name" value="Zn2-C6_fun-type_DNA-bd_sf"/>
</dbReference>
<dbReference type="InterPro" id="IPR001138">
    <property type="entry name" value="Zn2Cys6_DnaBD"/>
</dbReference>
<dbReference type="PANTHER" id="PTHR47338:SF3">
    <property type="entry name" value="C6 FINGER DOMAIN TRANSCRIPTION FACTOR DBAA-RELATED"/>
    <property type="match status" value="1"/>
</dbReference>
<dbReference type="PANTHER" id="PTHR47338">
    <property type="entry name" value="ZN(II)2CYS6 TRANSCRIPTION FACTOR (EUROFUNG)-RELATED"/>
    <property type="match status" value="1"/>
</dbReference>
<dbReference type="Pfam" id="PF04082">
    <property type="entry name" value="Fungal_trans"/>
    <property type="match status" value="1"/>
</dbReference>
<dbReference type="Pfam" id="PF00172">
    <property type="entry name" value="Zn_clus"/>
    <property type="match status" value="1"/>
</dbReference>
<dbReference type="SMART" id="SM00906">
    <property type="entry name" value="Fungal_trans"/>
    <property type="match status" value="1"/>
</dbReference>
<dbReference type="SMART" id="SM00066">
    <property type="entry name" value="GAL4"/>
    <property type="match status" value="1"/>
</dbReference>
<dbReference type="SUPFAM" id="SSF57701">
    <property type="entry name" value="Zn2/Cys6 DNA-binding domain"/>
    <property type="match status" value="1"/>
</dbReference>
<dbReference type="PROSITE" id="PS00463">
    <property type="entry name" value="ZN2_CY6_FUNGAL_1"/>
    <property type="match status" value="1"/>
</dbReference>
<dbReference type="PROSITE" id="PS50048">
    <property type="entry name" value="ZN2_CY6_FUNGAL_2"/>
    <property type="match status" value="1"/>
</dbReference>
<name>CTNR_MONPU</name>